<evidence type="ECO:0000255" key="1">
    <source>
        <dbReference type="HAMAP-Rule" id="MF_01148"/>
    </source>
</evidence>
<feature type="chain" id="PRO_0000178066" description="Apolipoprotein N-acyltransferase">
    <location>
        <begin position="1"/>
        <end position="521"/>
    </location>
</feature>
<feature type="transmembrane region" description="Helical" evidence="1">
    <location>
        <begin position="34"/>
        <end position="54"/>
    </location>
</feature>
<feature type="transmembrane region" description="Helical" evidence="1">
    <location>
        <begin position="64"/>
        <end position="84"/>
    </location>
</feature>
<feature type="transmembrane region" description="Helical" evidence="1">
    <location>
        <begin position="100"/>
        <end position="120"/>
    </location>
</feature>
<feature type="transmembrane region" description="Helical" evidence="1">
    <location>
        <begin position="137"/>
        <end position="157"/>
    </location>
</feature>
<feature type="transmembrane region" description="Helical" evidence="1">
    <location>
        <begin position="176"/>
        <end position="196"/>
    </location>
</feature>
<feature type="transmembrane region" description="Helical" evidence="1">
    <location>
        <begin position="206"/>
        <end position="226"/>
    </location>
</feature>
<feature type="transmembrane region" description="Helical" evidence="1">
    <location>
        <begin position="488"/>
        <end position="508"/>
    </location>
</feature>
<feature type="domain" description="CN hydrolase" evidence="1">
    <location>
        <begin position="240"/>
        <end position="480"/>
    </location>
</feature>
<feature type="active site" description="Proton acceptor" evidence="1">
    <location>
        <position position="281"/>
    </location>
</feature>
<feature type="active site" evidence="1">
    <location>
        <position position="341"/>
    </location>
</feature>
<feature type="active site" description="Nucleophile" evidence="1">
    <location>
        <position position="392"/>
    </location>
</feature>
<gene>
    <name evidence="1" type="primary">lnt</name>
    <name type="ordered locus">glr1731</name>
</gene>
<proteinExistence type="inferred from homology"/>
<organism>
    <name type="scientific">Gloeobacter violaceus (strain ATCC 29082 / PCC 7421)</name>
    <dbReference type="NCBI Taxonomy" id="251221"/>
    <lineage>
        <taxon>Bacteria</taxon>
        <taxon>Bacillati</taxon>
        <taxon>Cyanobacteriota</taxon>
        <taxon>Cyanophyceae</taxon>
        <taxon>Gloeobacterales</taxon>
        <taxon>Gloeobacteraceae</taxon>
        <taxon>Gloeobacter</taxon>
    </lineage>
</organism>
<sequence>MSGIALRRRREQAQRRRSIAGVLAAVGGGTALGLAAPPTGWGVLVWVALVPLLVYLRAEHRPRAFWLGTLAGMVYYAILLRWLLGFHPLTWLGIEWWPSLAIALGAWLFVSASQAWVIGLWASLVVRTRLSGLRRVLFAVGLWVGLHWLWGQGETAFPWGTLAQSLAGDLWAVQTVALGGAQLLVGLAVAVNALVAESWSTRRVGYAGLAALLAASVYLYGWWQLAQPLPAGEPLRMGVIQGNIAQARKWTPDGRRETVETYVRGYEELAAAGAQLVLTPETAFPFIWSRPTNPAAPLVPEIQSRRVPVLLSAFERRTDGQVATTLFALDGDARTISTFNKIHLVPFGEQIPLKALIGPLVRKLSPVQQEVFAGSLGQRLQTPVGLVAAGICFDSAFADGFRAQVAAGARLLVQSTNDAWYGPAMAPQHHALDALRAVETGRYLVRASNNGTSAVVDPLGRTTRITGWNVYAAFVEPVRLLEGMTLYALWGDWFVPLSAALALLGLIAGRSPAGRRGRRNF</sequence>
<accession>Q7NJV1</accession>
<comment type="function">
    <text evidence="1">Catalyzes the phospholipid dependent N-acylation of the N-terminal cysteine of apolipoprotein, the last step in lipoprotein maturation.</text>
</comment>
<comment type="catalytic activity">
    <reaction evidence="1">
        <text>N-terminal S-1,2-diacyl-sn-glyceryl-L-cysteinyl-[lipoprotein] + a glycerophospholipid = N-acyl-S-1,2-diacyl-sn-glyceryl-L-cysteinyl-[lipoprotein] + a 2-acyl-sn-glycero-3-phospholipid + H(+)</text>
        <dbReference type="Rhea" id="RHEA:48228"/>
        <dbReference type="Rhea" id="RHEA-COMP:14681"/>
        <dbReference type="Rhea" id="RHEA-COMP:14684"/>
        <dbReference type="ChEBI" id="CHEBI:15378"/>
        <dbReference type="ChEBI" id="CHEBI:136912"/>
        <dbReference type="ChEBI" id="CHEBI:140656"/>
        <dbReference type="ChEBI" id="CHEBI:140657"/>
        <dbReference type="ChEBI" id="CHEBI:140660"/>
        <dbReference type="EC" id="2.3.1.269"/>
    </reaction>
</comment>
<comment type="pathway">
    <text evidence="1">Protein modification; lipoprotein biosynthesis (N-acyl transfer).</text>
</comment>
<comment type="subcellular location">
    <subcellularLocation>
        <location evidence="1">Cell inner membrane</location>
        <topology evidence="1">Multi-pass membrane protein</topology>
    </subcellularLocation>
</comment>
<comment type="similarity">
    <text evidence="1">Belongs to the CN hydrolase family. Apolipoprotein N-acyltransferase subfamily.</text>
</comment>
<keyword id="KW-0012">Acyltransferase</keyword>
<keyword id="KW-0997">Cell inner membrane</keyword>
<keyword id="KW-1003">Cell membrane</keyword>
<keyword id="KW-0472">Membrane</keyword>
<keyword id="KW-1185">Reference proteome</keyword>
<keyword id="KW-0808">Transferase</keyword>
<keyword id="KW-0812">Transmembrane</keyword>
<keyword id="KW-1133">Transmembrane helix</keyword>
<name>LNT_GLOVI</name>
<protein>
    <recommendedName>
        <fullName evidence="1">Apolipoprotein N-acyltransferase</fullName>
        <shortName evidence="1">ALP N-acyltransferase</shortName>
        <ecNumber evidence="1">2.3.1.269</ecNumber>
    </recommendedName>
</protein>
<reference key="1">
    <citation type="journal article" date="2003" name="DNA Res.">
        <title>Complete genome structure of Gloeobacter violaceus PCC 7421, a cyanobacterium that lacks thylakoids.</title>
        <authorList>
            <person name="Nakamura Y."/>
            <person name="Kaneko T."/>
            <person name="Sato S."/>
            <person name="Mimuro M."/>
            <person name="Miyashita H."/>
            <person name="Tsuchiya T."/>
            <person name="Sasamoto S."/>
            <person name="Watanabe A."/>
            <person name="Kawashima K."/>
            <person name="Kishida Y."/>
            <person name="Kiyokawa C."/>
            <person name="Kohara M."/>
            <person name="Matsumoto M."/>
            <person name="Matsuno A."/>
            <person name="Nakazaki N."/>
            <person name="Shimpo S."/>
            <person name="Takeuchi C."/>
            <person name="Yamada M."/>
            <person name="Tabata S."/>
        </authorList>
    </citation>
    <scope>NUCLEOTIDE SEQUENCE [LARGE SCALE GENOMIC DNA]</scope>
    <source>
        <strain>ATCC 29082 / PCC 7421</strain>
    </source>
</reference>
<dbReference type="EC" id="2.3.1.269" evidence="1"/>
<dbReference type="EMBL" id="BA000045">
    <property type="protein sequence ID" value="BAC89672.1"/>
    <property type="molecule type" value="Genomic_DNA"/>
</dbReference>
<dbReference type="RefSeq" id="NP_924677.1">
    <property type="nucleotide sequence ID" value="NC_005125.1"/>
</dbReference>
<dbReference type="RefSeq" id="WP_011141729.1">
    <property type="nucleotide sequence ID" value="NC_005125.1"/>
</dbReference>
<dbReference type="SMR" id="Q7NJV1"/>
<dbReference type="FunCoup" id="Q7NJV1">
    <property type="interactions" value="12"/>
</dbReference>
<dbReference type="STRING" id="251221.gene:10759222"/>
<dbReference type="EnsemblBacteria" id="BAC89672">
    <property type="protein sequence ID" value="BAC89672"/>
    <property type="gene ID" value="BAC89672"/>
</dbReference>
<dbReference type="KEGG" id="gvi:glr1731"/>
<dbReference type="PATRIC" id="fig|251221.4.peg.1759"/>
<dbReference type="eggNOG" id="COG0815">
    <property type="taxonomic scope" value="Bacteria"/>
</dbReference>
<dbReference type="HOGENOM" id="CLU_019563_1_0_3"/>
<dbReference type="InParanoid" id="Q7NJV1"/>
<dbReference type="OrthoDB" id="9804277at2"/>
<dbReference type="PhylomeDB" id="Q7NJV1"/>
<dbReference type="UniPathway" id="UPA00666"/>
<dbReference type="Proteomes" id="UP000000557">
    <property type="component" value="Chromosome"/>
</dbReference>
<dbReference type="GO" id="GO:0005886">
    <property type="term" value="C:plasma membrane"/>
    <property type="evidence" value="ECO:0007669"/>
    <property type="project" value="UniProtKB-SubCell"/>
</dbReference>
<dbReference type="GO" id="GO:0016410">
    <property type="term" value="F:N-acyltransferase activity"/>
    <property type="evidence" value="ECO:0007669"/>
    <property type="project" value="UniProtKB-UniRule"/>
</dbReference>
<dbReference type="GO" id="GO:0042158">
    <property type="term" value="P:lipoprotein biosynthetic process"/>
    <property type="evidence" value="ECO:0007669"/>
    <property type="project" value="UniProtKB-UniRule"/>
</dbReference>
<dbReference type="CDD" id="cd07571">
    <property type="entry name" value="ALP_N-acyl_transferase"/>
    <property type="match status" value="1"/>
</dbReference>
<dbReference type="Gene3D" id="3.60.110.10">
    <property type="entry name" value="Carbon-nitrogen hydrolase"/>
    <property type="match status" value="1"/>
</dbReference>
<dbReference type="HAMAP" id="MF_01148">
    <property type="entry name" value="Lnt"/>
    <property type="match status" value="1"/>
</dbReference>
<dbReference type="InterPro" id="IPR004563">
    <property type="entry name" value="Apolipo_AcylTrfase"/>
</dbReference>
<dbReference type="InterPro" id="IPR003010">
    <property type="entry name" value="C-N_Hydrolase"/>
</dbReference>
<dbReference type="InterPro" id="IPR036526">
    <property type="entry name" value="C-N_Hydrolase_sf"/>
</dbReference>
<dbReference type="InterPro" id="IPR045378">
    <property type="entry name" value="LNT_N"/>
</dbReference>
<dbReference type="NCBIfam" id="TIGR00546">
    <property type="entry name" value="lnt"/>
    <property type="match status" value="1"/>
</dbReference>
<dbReference type="PANTHER" id="PTHR38686">
    <property type="entry name" value="APOLIPOPROTEIN N-ACYLTRANSFERASE"/>
    <property type="match status" value="1"/>
</dbReference>
<dbReference type="PANTHER" id="PTHR38686:SF1">
    <property type="entry name" value="APOLIPOPROTEIN N-ACYLTRANSFERASE"/>
    <property type="match status" value="1"/>
</dbReference>
<dbReference type="Pfam" id="PF00795">
    <property type="entry name" value="CN_hydrolase"/>
    <property type="match status" value="1"/>
</dbReference>
<dbReference type="Pfam" id="PF20154">
    <property type="entry name" value="LNT_N"/>
    <property type="match status" value="1"/>
</dbReference>
<dbReference type="SUPFAM" id="SSF56317">
    <property type="entry name" value="Carbon-nitrogen hydrolase"/>
    <property type="match status" value="1"/>
</dbReference>
<dbReference type="PROSITE" id="PS50263">
    <property type="entry name" value="CN_HYDROLASE"/>
    <property type="match status" value="1"/>
</dbReference>